<keyword id="KW-0998">Cell outer membrane</keyword>
<keyword id="KW-0143">Chaperone</keyword>
<keyword id="KW-0449">Lipoprotein</keyword>
<keyword id="KW-0472">Membrane</keyword>
<keyword id="KW-0564">Palmitate</keyword>
<keyword id="KW-0653">Protein transport</keyword>
<keyword id="KW-0732">Signal</keyword>
<keyword id="KW-0813">Transport</keyword>
<organism>
    <name type="scientific">Francisella tularensis subsp. novicida (strain U112)</name>
    <dbReference type="NCBI Taxonomy" id="401614"/>
    <lineage>
        <taxon>Bacteria</taxon>
        <taxon>Pseudomonadati</taxon>
        <taxon>Pseudomonadota</taxon>
        <taxon>Gammaproteobacteria</taxon>
        <taxon>Thiotrichales</taxon>
        <taxon>Francisellaceae</taxon>
        <taxon>Francisella</taxon>
    </lineage>
</organism>
<comment type="function">
    <text evidence="1">Plays a critical role in the incorporation of lipoproteins in the outer membrane after they are released by the LolA protein.</text>
</comment>
<comment type="subunit">
    <text evidence="1">Monomer.</text>
</comment>
<comment type="subcellular location">
    <subcellularLocation>
        <location evidence="1">Cell outer membrane</location>
        <topology evidence="1">Lipid-anchor</topology>
    </subcellularLocation>
</comment>
<comment type="similarity">
    <text evidence="1">Belongs to the LolB family.</text>
</comment>
<comment type="sequence caution" evidence="2">
    <conflict type="erroneous initiation">
        <sequence resource="EMBL-CDS" id="ABK89056"/>
    </conflict>
</comment>
<proteinExistence type="inferred from homology"/>
<gene>
    <name evidence="1" type="primary">lolB</name>
    <name type="ordered locus">FTN_0145</name>
</gene>
<name>LOLB_FRATN</name>
<evidence type="ECO:0000255" key="1">
    <source>
        <dbReference type="HAMAP-Rule" id="MF_00233"/>
    </source>
</evidence>
<evidence type="ECO:0000305" key="2"/>
<protein>
    <recommendedName>
        <fullName evidence="1">Outer-membrane lipoprotein LolB</fullName>
    </recommendedName>
</protein>
<reference key="1">
    <citation type="journal article" date="2007" name="Genome Biol.">
        <title>Comparison of Francisella tularensis genomes reveals evolutionary events associated with the emergence of human pathogenic strains.</title>
        <authorList>
            <person name="Rohmer L."/>
            <person name="Fong C."/>
            <person name="Abmayr S."/>
            <person name="Wasnick M."/>
            <person name="Larson Freeman T.J."/>
            <person name="Radey M."/>
            <person name="Guina T."/>
            <person name="Svensson K."/>
            <person name="Hayden H.S."/>
            <person name="Jacobs M."/>
            <person name="Gallagher L.A."/>
            <person name="Manoil C."/>
            <person name="Ernst R.K."/>
            <person name="Drees B."/>
            <person name="Buckley D."/>
            <person name="Haugen E."/>
            <person name="Bovee D."/>
            <person name="Zhou Y."/>
            <person name="Chang J."/>
            <person name="Levy R."/>
            <person name="Lim R."/>
            <person name="Gillett W."/>
            <person name="Guenthener D."/>
            <person name="Kang A."/>
            <person name="Shaffer S.A."/>
            <person name="Taylor G."/>
            <person name="Chen J."/>
            <person name="Gallis B."/>
            <person name="D'Argenio D.A."/>
            <person name="Forsman M."/>
            <person name="Olson M.V."/>
            <person name="Goodlett D.R."/>
            <person name="Kaul R."/>
            <person name="Miller S.I."/>
            <person name="Brittnacher M.J."/>
        </authorList>
    </citation>
    <scope>NUCLEOTIDE SEQUENCE [LARGE SCALE GENOMIC DNA]</scope>
    <source>
        <strain>U112</strain>
    </source>
</reference>
<dbReference type="EMBL" id="CP000439">
    <property type="protein sequence ID" value="ABK89056.1"/>
    <property type="status" value="ALT_INIT"/>
    <property type="molecule type" value="Genomic_DNA"/>
</dbReference>
<dbReference type="SMR" id="A0Q491"/>
<dbReference type="KEGG" id="ftn:FTN_0145"/>
<dbReference type="KEGG" id="ftx:AW25_55"/>
<dbReference type="Proteomes" id="UP000000762">
    <property type="component" value="Chromosome"/>
</dbReference>
<dbReference type="GO" id="GO:0009279">
    <property type="term" value="C:cell outer membrane"/>
    <property type="evidence" value="ECO:0007669"/>
    <property type="project" value="UniProtKB-SubCell"/>
</dbReference>
<dbReference type="GO" id="GO:0044874">
    <property type="term" value="P:lipoprotein localization to outer membrane"/>
    <property type="evidence" value="ECO:0007669"/>
    <property type="project" value="UniProtKB-UniRule"/>
</dbReference>
<dbReference type="GO" id="GO:0015031">
    <property type="term" value="P:protein transport"/>
    <property type="evidence" value="ECO:0007669"/>
    <property type="project" value="UniProtKB-KW"/>
</dbReference>
<dbReference type="CDD" id="cd16326">
    <property type="entry name" value="LolB"/>
    <property type="match status" value="1"/>
</dbReference>
<dbReference type="Gene3D" id="2.50.20.10">
    <property type="entry name" value="Lipoprotein localisation LolA/LolB/LppX"/>
    <property type="match status" value="1"/>
</dbReference>
<dbReference type="HAMAP" id="MF_00233">
    <property type="entry name" value="LolB"/>
    <property type="match status" value="1"/>
</dbReference>
<dbReference type="InterPro" id="IPR029046">
    <property type="entry name" value="LolA/LolB/LppX"/>
</dbReference>
<dbReference type="InterPro" id="IPR004565">
    <property type="entry name" value="OM_lipoprot_LolB"/>
</dbReference>
<dbReference type="NCBIfam" id="TIGR00548">
    <property type="entry name" value="lolB"/>
    <property type="match status" value="1"/>
</dbReference>
<dbReference type="Pfam" id="PF03550">
    <property type="entry name" value="LolB"/>
    <property type="match status" value="1"/>
</dbReference>
<dbReference type="SUPFAM" id="SSF89392">
    <property type="entry name" value="Prokaryotic lipoproteins and lipoprotein localization factors"/>
    <property type="match status" value="1"/>
</dbReference>
<dbReference type="PROSITE" id="PS51257">
    <property type="entry name" value="PROKAR_LIPOPROTEIN"/>
    <property type="match status" value="1"/>
</dbReference>
<feature type="signal peptide" evidence="1">
    <location>
        <begin position="1"/>
        <end position="26"/>
    </location>
</feature>
<feature type="chain" id="PRO_0000336603" description="Outer-membrane lipoprotein LolB">
    <location>
        <begin position="27"/>
        <end position="210"/>
    </location>
</feature>
<feature type="lipid moiety-binding region" description="N-palmitoyl cysteine" evidence="1">
    <location>
        <position position="27"/>
    </location>
</feature>
<feature type="lipid moiety-binding region" description="S-diacylglycerol cysteine" evidence="1">
    <location>
        <position position="27"/>
    </location>
</feature>
<sequence length="210" mass="23598">MSKLKIDTKRRFSLLIALVLIISLSSCATTQTNVTAITTKTVFNQETTYHNLLKLKKWQANGVIGIIYDNQAESANYTYLQDGDNFSIKLYGPLGIGSIEIKGDTNSVSLANSKGQKLTAKDAKTLMLEQLGWYVPVEGLKYWIKAIAIPNIRQTSELNTNNLLSKLSQNGWSISYSNYQLVDSKYPLPTKIRMSRDNLTLKIVIKSWQI</sequence>
<accession>A0Q491</accession>